<reference key="1">
    <citation type="journal article" date="1994" name="J. Biol. Chem.">
        <title>Yeast TFIIE. Cloning, expression, and homology to vertebrate proteins.</title>
        <authorList>
            <person name="Feaver W.J."/>
            <person name="Henry N.L."/>
            <person name="Bushnell D.A."/>
            <person name="Sayre M.H."/>
            <person name="Brickner J.H."/>
            <person name="Gileadi O."/>
            <person name="Kornberg R.D."/>
        </authorList>
    </citation>
    <scope>NUCLEOTIDE SEQUENCE [GENOMIC DNA]</scope>
    <scope>PROTEIN SEQUENCE OF 66-71; 102-108 AND 206-220</scope>
    <scope>SUBUNIT</scope>
    <source>
        <strain>ATCC 208279 / BJ926</strain>
    </source>
</reference>
<reference key="2">
    <citation type="journal article" date="1994" name="Nature">
        <title>Complete DNA sequence of yeast chromosome XI.</title>
        <authorList>
            <person name="Dujon B."/>
            <person name="Alexandraki D."/>
            <person name="Andre B."/>
            <person name="Ansorge W."/>
            <person name="Baladron V."/>
            <person name="Ballesta J.P.G."/>
            <person name="Banrevi A."/>
            <person name="Bolle P.-A."/>
            <person name="Bolotin-Fukuhara M."/>
            <person name="Bossier P."/>
            <person name="Bou G."/>
            <person name="Boyer J."/>
            <person name="Buitrago M.J."/>
            <person name="Cheret G."/>
            <person name="Colleaux L."/>
            <person name="Daignan-Fornier B."/>
            <person name="del Rey F."/>
            <person name="Dion C."/>
            <person name="Domdey H."/>
            <person name="Duesterhoeft A."/>
            <person name="Duesterhus S."/>
            <person name="Entian K.-D."/>
            <person name="Erfle H."/>
            <person name="Esteban P.F."/>
            <person name="Feldmann H."/>
            <person name="Fernandes L."/>
            <person name="Fobo G.M."/>
            <person name="Fritz C."/>
            <person name="Fukuhara H."/>
            <person name="Gabel C."/>
            <person name="Gaillon L."/>
            <person name="Garcia-Cantalejo J.M."/>
            <person name="Garcia-Ramirez J.J."/>
            <person name="Gent M.E."/>
            <person name="Ghazvini M."/>
            <person name="Goffeau A."/>
            <person name="Gonzalez A."/>
            <person name="Grothues D."/>
            <person name="Guerreiro P."/>
            <person name="Hegemann J.H."/>
            <person name="Hewitt N."/>
            <person name="Hilger F."/>
            <person name="Hollenberg C.P."/>
            <person name="Horaitis O."/>
            <person name="Indge K.J."/>
            <person name="Jacquier A."/>
            <person name="James C.M."/>
            <person name="Jauniaux J.-C."/>
            <person name="Jimenez A."/>
            <person name="Keuchel H."/>
            <person name="Kirchrath L."/>
            <person name="Kleine K."/>
            <person name="Koetter P."/>
            <person name="Legrain P."/>
            <person name="Liebl S."/>
            <person name="Louis E.J."/>
            <person name="Maia e Silva A."/>
            <person name="Marck C."/>
            <person name="Monnier A.-L."/>
            <person name="Moestl D."/>
            <person name="Mueller S."/>
            <person name="Obermaier B."/>
            <person name="Oliver S.G."/>
            <person name="Pallier C."/>
            <person name="Pascolo S."/>
            <person name="Pfeiffer F."/>
            <person name="Philippsen P."/>
            <person name="Planta R.J."/>
            <person name="Pohl F.M."/>
            <person name="Pohl T.M."/>
            <person name="Poehlmann R."/>
            <person name="Portetelle D."/>
            <person name="Purnelle B."/>
            <person name="Puzos V."/>
            <person name="Ramezani Rad M."/>
            <person name="Rasmussen S.W."/>
            <person name="Remacha M.A."/>
            <person name="Revuelta J.L."/>
            <person name="Richard G.-F."/>
            <person name="Rieger M."/>
            <person name="Rodrigues-Pousada C."/>
            <person name="Rose M."/>
            <person name="Rupp T."/>
            <person name="Santos M.A."/>
            <person name="Schwager C."/>
            <person name="Sensen C."/>
            <person name="Skala J."/>
            <person name="Soares H."/>
            <person name="Sor F."/>
            <person name="Stegemann J."/>
            <person name="Tettelin H."/>
            <person name="Thierry A."/>
            <person name="Tzermia M."/>
            <person name="Urrestarazu L.A."/>
            <person name="van Dyck L."/>
            <person name="van Vliet-Reedijk J.C."/>
            <person name="Valens M."/>
            <person name="Vandenbol M."/>
            <person name="Vilela C."/>
            <person name="Vissers S."/>
            <person name="von Wettstein D."/>
            <person name="Voss H."/>
            <person name="Wiemann S."/>
            <person name="Xu G."/>
            <person name="Zimmermann J."/>
            <person name="Haasemann M."/>
            <person name="Becker I."/>
            <person name="Mewes H.-W."/>
        </authorList>
    </citation>
    <scope>NUCLEOTIDE SEQUENCE [LARGE SCALE GENOMIC DNA]</scope>
    <source>
        <strain>ATCC 204508 / S288c</strain>
    </source>
</reference>
<reference key="3">
    <citation type="journal article" date="2014" name="G3 (Bethesda)">
        <title>The reference genome sequence of Saccharomyces cerevisiae: Then and now.</title>
        <authorList>
            <person name="Engel S.R."/>
            <person name="Dietrich F.S."/>
            <person name="Fisk D.G."/>
            <person name="Binkley G."/>
            <person name="Balakrishnan R."/>
            <person name="Costanzo M.C."/>
            <person name="Dwight S.S."/>
            <person name="Hitz B.C."/>
            <person name="Karra K."/>
            <person name="Nash R.S."/>
            <person name="Weng S."/>
            <person name="Wong E.D."/>
            <person name="Lloyd P."/>
            <person name="Skrzypek M.S."/>
            <person name="Miyasato S.R."/>
            <person name="Simison M."/>
            <person name="Cherry J.M."/>
        </authorList>
    </citation>
    <scope>GENOME REANNOTATION</scope>
    <source>
        <strain>ATCC 204508 / S288c</strain>
    </source>
</reference>
<reference key="4">
    <citation type="journal article" date="2003" name="Nature">
        <title>Global analysis of protein expression in yeast.</title>
        <authorList>
            <person name="Ghaemmaghami S."/>
            <person name="Huh W.-K."/>
            <person name="Bower K."/>
            <person name="Howson R.W."/>
            <person name="Belle A."/>
            <person name="Dephoure N."/>
            <person name="O'Shea E.K."/>
            <person name="Weissman J.S."/>
        </authorList>
    </citation>
    <scope>LEVEL OF PROTEIN EXPRESSION [LARGE SCALE ANALYSIS]</scope>
</reference>
<comment type="function">
    <text evidence="1">Recruits TFIIH to the initiation complex and stimulates the RNA polymerase II C-terminal domain kinase and DNA-dependent ATPase activities of TFIIH. Both TFIIH and TFIIE are required for promoter clearance by RNA polymerase (By similarity).</text>
</comment>
<comment type="subunit">
    <text evidence="1">TFIIE is a tetramer of two alpha (TFA1) and two beta (TFA2) subunits.</text>
</comment>
<comment type="interaction">
    <interactant intactId="EBI-18903">
        <id>P36100</id>
    </interactant>
    <interactant intactId="EBI-18907">
        <id>P36145</id>
        <label>TFA2</label>
    </interactant>
    <organismsDiffer>false</organismsDiffer>
    <experiments>3</experiments>
</comment>
<comment type="interaction">
    <interactant intactId="EBI-18903">
        <id>P36100</id>
    </interactant>
    <interactant intactId="EBI-19146">
        <id>P32776</id>
        <label>TFB1</label>
    </interactant>
    <organismsDiffer>false</organismsDiffer>
    <experiments>3</experiments>
</comment>
<comment type="subcellular location">
    <subcellularLocation>
        <location evidence="6">Nucleus</location>
    </subcellularLocation>
</comment>
<comment type="miscellaneous">
    <text evidence="5">Present with 35900 molecules/cell in log phase SD medium.</text>
</comment>
<comment type="similarity">
    <text evidence="6">Belongs to the TFIIE alpha subunit family.</text>
</comment>
<accession>P36100</accession>
<accession>D6VXQ6</accession>
<name>T2EA_YEAST</name>
<sequence length="482" mass="54742">MDRPIDDIVKNLLKFVVRGFYGGSFVLVLDAILFHSVLAEDDLKQLLSINKTELGPLIARLRSDRLISIHKQREYPPNSKSVERVYYYVKYPHAIDAIKWKVHQVVQRLKDDLDKNSEPNGYMCPICLTKYTQLEAVQLLNFDRTEFLCSLCDEPLVEDDSGKKNKEKQDKLNRLMDQIQPIIDSLKKIDDSRIEENTFEIALARLIPPQNQSHAAYTYNPKKGSTMFRPGDSAPLPNLMGTALGNDSSRRAGANSQATLHINITTASDEVAQRELQERQAEEKRKQNAVPEWHKQSTIGKTALGRLDNEEEFDPVVTASAMDSINPDNEPAQETSYQNNRTLTEQEMEERENEKTLNDYYAALAKKQAKLNKEEEEEEEEEEDEEEEEEEEMEDVMDDNDETARENALEDEFEDVTDTAGTAKTESNTSNDVKQESINDKTEDAVNATATASGPSANAKPNDGDDDDDDDDDEMDIEFEDV</sequence>
<keyword id="KW-0002">3D-structure</keyword>
<keyword id="KW-0903">Direct protein sequencing</keyword>
<keyword id="KW-0479">Metal-binding</keyword>
<keyword id="KW-0539">Nucleus</keyword>
<keyword id="KW-1185">Reference proteome</keyword>
<keyword id="KW-0804">Transcription</keyword>
<keyword id="KW-0805">Transcription regulation</keyword>
<keyword id="KW-0862">Zinc</keyword>
<keyword id="KW-0863">Zinc-finger</keyword>
<dbReference type="EMBL" id="U12825">
    <property type="protein sequence ID" value="AAA62665.1"/>
    <property type="molecule type" value="Genomic_DNA"/>
</dbReference>
<dbReference type="EMBL" id="Z28028">
    <property type="protein sequence ID" value="CAA81863.1"/>
    <property type="molecule type" value="Genomic_DNA"/>
</dbReference>
<dbReference type="EMBL" id="BK006944">
    <property type="protein sequence ID" value="DAA09126.1"/>
    <property type="molecule type" value="Genomic_DNA"/>
</dbReference>
<dbReference type="PIR" id="S37845">
    <property type="entry name" value="S37845"/>
</dbReference>
<dbReference type="RefSeq" id="NP_012897.3">
    <property type="nucleotide sequence ID" value="NM_001179594.3"/>
</dbReference>
<dbReference type="PDB" id="5FMF">
    <property type="method" value="EM"/>
    <property type="resolution" value="6.00 A"/>
    <property type="chains" value="R=1-160"/>
</dbReference>
<dbReference type="PDB" id="5FYW">
    <property type="method" value="EM"/>
    <property type="resolution" value="4.35 A"/>
    <property type="chains" value="W=1-482"/>
</dbReference>
<dbReference type="PDB" id="5FZ5">
    <property type="method" value="EM"/>
    <property type="resolution" value="8.80 A"/>
    <property type="chains" value="W=1-482"/>
</dbReference>
<dbReference type="PDB" id="5OQJ">
    <property type="method" value="EM"/>
    <property type="resolution" value="4.70 A"/>
    <property type="chains" value="W=1-482"/>
</dbReference>
<dbReference type="PDB" id="5OQM">
    <property type="method" value="EM"/>
    <property type="resolution" value="5.80 A"/>
    <property type="chains" value="W=332-482"/>
</dbReference>
<dbReference type="PDB" id="5SVA">
    <property type="method" value="EM"/>
    <property type="resolution" value="15.30 A"/>
    <property type="chains" value="h=1-482"/>
</dbReference>
<dbReference type="PDB" id="6GYL">
    <property type="method" value="EM"/>
    <property type="resolution" value="4.80 A"/>
    <property type="chains" value="W=1-482"/>
</dbReference>
<dbReference type="PDB" id="6GYM">
    <property type="method" value="EM"/>
    <property type="resolution" value="6.70 A"/>
    <property type="chains" value="W=1-482"/>
</dbReference>
<dbReference type="PDB" id="7ML0">
    <property type="method" value="EM"/>
    <property type="resolution" value="3.00 A"/>
    <property type="chains" value="W=1-482"/>
</dbReference>
<dbReference type="PDB" id="7ML1">
    <property type="method" value="EM"/>
    <property type="resolution" value="4.00 A"/>
    <property type="chains" value="W=1-482"/>
</dbReference>
<dbReference type="PDB" id="7ML2">
    <property type="method" value="EM"/>
    <property type="resolution" value="3.40 A"/>
    <property type="chains" value="W=1-482"/>
</dbReference>
<dbReference type="PDB" id="7ML4">
    <property type="method" value="EM"/>
    <property type="resolution" value="3.10 A"/>
    <property type="chains" value="W=1-482"/>
</dbReference>
<dbReference type="PDB" id="7O4I">
    <property type="method" value="EM"/>
    <property type="resolution" value="3.20 A"/>
    <property type="chains" value="W=1-482"/>
</dbReference>
<dbReference type="PDB" id="7O4J">
    <property type="method" value="EM"/>
    <property type="resolution" value="2.90 A"/>
    <property type="chains" value="W=1-482"/>
</dbReference>
<dbReference type="PDB" id="7O4K">
    <property type="method" value="EM"/>
    <property type="resolution" value="3.60 A"/>
    <property type="chains" value="W=1-482"/>
</dbReference>
<dbReference type="PDB" id="7O4L">
    <property type="method" value="EM"/>
    <property type="resolution" value="3.40 A"/>
    <property type="chains" value="W=1-482"/>
</dbReference>
<dbReference type="PDB" id="7O72">
    <property type="method" value="EM"/>
    <property type="resolution" value="3.40 A"/>
    <property type="chains" value="W=1-482"/>
</dbReference>
<dbReference type="PDB" id="7O73">
    <property type="method" value="EM"/>
    <property type="resolution" value="3.40 A"/>
    <property type="chains" value="W=1-482"/>
</dbReference>
<dbReference type="PDB" id="7O75">
    <property type="method" value="EM"/>
    <property type="resolution" value="3.20 A"/>
    <property type="chains" value="W=1-482"/>
</dbReference>
<dbReference type="PDB" id="7ZS9">
    <property type="method" value="EM"/>
    <property type="resolution" value="3.10 A"/>
    <property type="chains" value="W=1-482"/>
</dbReference>
<dbReference type="PDB" id="7ZSA">
    <property type="method" value="EM"/>
    <property type="resolution" value="4.00 A"/>
    <property type="chains" value="W=1-482"/>
</dbReference>
<dbReference type="PDB" id="7ZSB">
    <property type="method" value="EM"/>
    <property type="resolution" value="6.60 A"/>
    <property type="chains" value="W=1-482"/>
</dbReference>
<dbReference type="PDB" id="8CEN">
    <property type="method" value="EM"/>
    <property type="resolution" value="3.00 A"/>
    <property type="chains" value="W=1-482"/>
</dbReference>
<dbReference type="PDB" id="8CEO">
    <property type="method" value="EM"/>
    <property type="resolution" value="3.60 A"/>
    <property type="chains" value="W=1-482"/>
</dbReference>
<dbReference type="PDB" id="8UMH">
    <property type="method" value="EM"/>
    <property type="resolution" value="4.10 A"/>
    <property type="chains" value="W=1-482"/>
</dbReference>
<dbReference type="PDB" id="8UMI">
    <property type="method" value="EM"/>
    <property type="resolution" value="3.70 A"/>
    <property type="chains" value="W=1-482"/>
</dbReference>
<dbReference type="PDB" id="8UOQ">
    <property type="method" value="EM"/>
    <property type="resolution" value="3.80 A"/>
    <property type="chains" value="W=1-482"/>
</dbReference>
<dbReference type="PDB" id="8UOT">
    <property type="method" value="EM"/>
    <property type="resolution" value="3.70 A"/>
    <property type="chains" value="W=1-482"/>
</dbReference>
<dbReference type="PDBsum" id="5FMF"/>
<dbReference type="PDBsum" id="5FYW"/>
<dbReference type="PDBsum" id="5FZ5"/>
<dbReference type="PDBsum" id="5OQJ"/>
<dbReference type="PDBsum" id="5OQM"/>
<dbReference type="PDBsum" id="5SVA"/>
<dbReference type="PDBsum" id="6GYL"/>
<dbReference type="PDBsum" id="6GYM"/>
<dbReference type="PDBsum" id="7ML0"/>
<dbReference type="PDBsum" id="7ML1"/>
<dbReference type="PDBsum" id="7ML2"/>
<dbReference type="PDBsum" id="7ML4"/>
<dbReference type="PDBsum" id="7O4I"/>
<dbReference type="PDBsum" id="7O4J"/>
<dbReference type="PDBsum" id="7O4K"/>
<dbReference type="PDBsum" id="7O4L"/>
<dbReference type="PDBsum" id="7O72"/>
<dbReference type="PDBsum" id="7O73"/>
<dbReference type="PDBsum" id="7O75"/>
<dbReference type="PDBsum" id="7ZS9"/>
<dbReference type="PDBsum" id="7ZSA"/>
<dbReference type="PDBsum" id="7ZSB"/>
<dbReference type="PDBsum" id="8CEN"/>
<dbReference type="PDBsum" id="8CEO"/>
<dbReference type="PDBsum" id="8UMH"/>
<dbReference type="PDBsum" id="8UMI"/>
<dbReference type="PDBsum" id="8UOQ"/>
<dbReference type="PDBsum" id="8UOT"/>
<dbReference type="EMDB" id="EMD-0091"/>
<dbReference type="EMDB" id="EMD-0092"/>
<dbReference type="EMDB" id="EMD-12719"/>
<dbReference type="EMDB" id="EMD-12720"/>
<dbReference type="EMDB" id="EMD-12721"/>
<dbReference type="EMDB" id="EMD-12722"/>
<dbReference type="EMDB" id="EMD-12743"/>
<dbReference type="EMDB" id="EMD-12744"/>
<dbReference type="EMDB" id="EMD-12745"/>
<dbReference type="EMDB" id="EMD-14927"/>
<dbReference type="EMDB" id="EMD-14928"/>
<dbReference type="EMDB" id="EMD-14929"/>
<dbReference type="EMDB" id="EMD-16610"/>
<dbReference type="EMDB" id="EMD-16611"/>
<dbReference type="EMDB" id="EMD-3378"/>
<dbReference type="EMDB" id="EMD-3383"/>
<dbReference type="EMDB" id="EMD-3846"/>
<dbReference type="EMDB" id="EMD-3850"/>
<dbReference type="EMDB" id="EMD-42437"/>
<dbReference type="EMDB" id="EMD-42438"/>
<dbReference type="EMDB" id="EMD-8305"/>
<dbReference type="SMR" id="P36100"/>
<dbReference type="BioGRID" id="34103">
    <property type="interactions" value="175"/>
</dbReference>
<dbReference type="ComplexPortal" id="CPX-1658">
    <property type="entry name" value="General transcription factor complex TFIIE"/>
</dbReference>
<dbReference type="DIP" id="DIP-1700N"/>
<dbReference type="FunCoup" id="P36100">
    <property type="interactions" value="201"/>
</dbReference>
<dbReference type="IntAct" id="P36100">
    <property type="interactions" value="7"/>
</dbReference>
<dbReference type="MINT" id="P36100"/>
<dbReference type="STRING" id="4932.YKL028W"/>
<dbReference type="iPTMnet" id="P36100"/>
<dbReference type="PaxDb" id="4932-YKL028W"/>
<dbReference type="PeptideAtlas" id="P36100"/>
<dbReference type="EnsemblFungi" id="YKL028W_mRNA">
    <property type="protein sequence ID" value="YKL028W"/>
    <property type="gene ID" value="YKL028W"/>
</dbReference>
<dbReference type="GeneID" id="853840"/>
<dbReference type="KEGG" id="sce:YKL028W"/>
<dbReference type="AGR" id="SGD:S000001511"/>
<dbReference type="SGD" id="S000001511">
    <property type="gene designation" value="TFA1"/>
</dbReference>
<dbReference type="VEuPathDB" id="FungiDB:YKL028W"/>
<dbReference type="eggNOG" id="KOG2593">
    <property type="taxonomic scope" value="Eukaryota"/>
</dbReference>
<dbReference type="GeneTree" id="ENSGT00390000016696"/>
<dbReference type="HOGENOM" id="CLU_035744_2_0_1"/>
<dbReference type="InParanoid" id="P36100"/>
<dbReference type="OMA" id="DAIKWKV"/>
<dbReference type="OrthoDB" id="361102at2759"/>
<dbReference type="BioCyc" id="YEAST:G3O-31834-MONOMER"/>
<dbReference type="Reactome" id="R-SCE-674695">
    <property type="pathway name" value="RNA Polymerase II Pre-transcription Events"/>
</dbReference>
<dbReference type="Reactome" id="R-SCE-6807505">
    <property type="pathway name" value="RNA polymerase II transcribes snRNA genes"/>
</dbReference>
<dbReference type="Reactome" id="R-SCE-73776">
    <property type="pathway name" value="RNA Polymerase II Promoter Escape"/>
</dbReference>
<dbReference type="Reactome" id="R-SCE-73779">
    <property type="pathway name" value="RNA Polymerase II Transcription Pre-Initiation And Promoter Opening"/>
</dbReference>
<dbReference type="Reactome" id="R-SCE-75953">
    <property type="pathway name" value="RNA Polymerase II Transcription Initiation"/>
</dbReference>
<dbReference type="Reactome" id="R-SCE-76042">
    <property type="pathway name" value="RNA Polymerase II Transcription Initiation And Promoter Clearance"/>
</dbReference>
<dbReference type="BioGRID-ORCS" id="853840">
    <property type="hits" value="1 hit in 10 CRISPR screens"/>
</dbReference>
<dbReference type="EvolutionaryTrace" id="P36100"/>
<dbReference type="PRO" id="PR:P36100"/>
<dbReference type="Proteomes" id="UP000002311">
    <property type="component" value="Chromosome XI"/>
</dbReference>
<dbReference type="RNAct" id="P36100">
    <property type="molecule type" value="protein"/>
</dbReference>
<dbReference type="GO" id="GO:0005739">
    <property type="term" value="C:mitochondrion"/>
    <property type="evidence" value="ECO:0007005"/>
    <property type="project" value="SGD"/>
</dbReference>
<dbReference type="GO" id="GO:0005634">
    <property type="term" value="C:nucleus"/>
    <property type="evidence" value="ECO:0000314"/>
    <property type="project" value="ComplexPortal"/>
</dbReference>
<dbReference type="GO" id="GO:0005673">
    <property type="term" value="C:transcription factor TFIIE complex"/>
    <property type="evidence" value="ECO:0000314"/>
    <property type="project" value="SGD"/>
</dbReference>
<dbReference type="GO" id="GO:0097550">
    <property type="term" value="C:transcription preinitiation complex"/>
    <property type="evidence" value="ECO:0000314"/>
    <property type="project" value="SGD"/>
</dbReference>
<dbReference type="GO" id="GO:0000993">
    <property type="term" value="F:RNA polymerase II complex binding"/>
    <property type="evidence" value="ECO:0000353"/>
    <property type="project" value="SGD"/>
</dbReference>
<dbReference type="GO" id="GO:0008270">
    <property type="term" value="F:zinc ion binding"/>
    <property type="evidence" value="ECO:0007669"/>
    <property type="project" value="UniProtKB-KW"/>
</dbReference>
<dbReference type="GO" id="GO:0006366">
    <property type="term" value="P:transcription by RNA polymerase II"/>
    <property type="evidence" value="ECO:0000314"/>
    <property type="project" value="SGD"/>
</dbReference>
<dbReference type="GO" id="GO:0006367">
    <property type="term" value="P:transcription initiation at RNA polymerase II promoter"/>
    <property type="evidence" value="ECO:0000314"/>
    <property type="project" value="ComplexPortal"/>
</dbReference>
<dbReference type="GO" id="GO:0001113">
    <property type="term" value="P:transcription open complex formation at RNA polymerase II promoter"/>
    <property type="evidence" value="ECO:0000314"/>
    <property type="project" value="SGD"/>
</dbReference>
<dbReference type="DisProt" id="DP01237"/>
<dbReference type="FunFam" id="3.30.40.10:FF:000459">
    <property type="entry name" value="TFA1p TFIIE large subunit"/>
    <property type="match status" value="1"/>
</dbReference>
<dbReference type="Gene3D" id="3.30.40.10">
    <property type="entry name" value="Zinc/RING finger domain, C3HC4 (zinc finger)"/>
    <property type="match status" value="1"/>
</dbReference>
<dbReference type="InterPro" id="IPR039997">
    <property type="entry name" value="TFE"/>
</dbReference>
<dbReference type="InterPro" id="IPR017919">
    <property type="entry name" value="TFIIE/TFIIEa_HTH"/>
</dbReference>
<dbReference type="InterPro" id="IPR002853">
    <property type="entry name" value="TFIIE_asu"/>
</dbReference>
<dbReference type="InterPro" id="IPR024550">
    <property type="entry name" value="TFIIEa/SarR/Rpc3_HTH_dom"/>
</dbReference>
<dbReference type="InterPro" id="IPR013083">
    <property type="entry name" value="Znf_RING/FYVE/PHD"/>
</dbReference>
<dbReference type="PANTHER" id="PTHR13097:SF7">
    <property type="entry name" value="GENERAL TRANSCRIPTION FACTOR IIE SUBUNIT 1"/>
    <property type="match status" value="1"/>
</dbReference>
<dbReference type="PANTHER" id="PTHR13097">
    <property type="entry name" value="TRANSCRIPTION INITIATION FACTOR IIE, ALPHA SUBUNIT"/>
    <property type="match status" value="1"/>
</dbReference>
<dbReference type="Pfam" id="PF02002">
    <property type="entry name" value="TFIIE_alpha"/>
    <property type="match status" value="1"/>
</dbReference>
<dbReference type="SMART" id="SM00531">
    <property type="entry name" value="TFIIE"/>
    <property type="match status" value="1"/>
</dbReference>
<dbReference type="SUPFAM" id="SSF57783">
    <property type="entry name" value="Zinc beta-ribbon"/>
    <property type="match status" value="1"/>
</dbReference>
<dbReference type="PROSITE" id="PS51344">
    <property type="entry name" value="HTH_TFE_IIE"/>
    <property type="match status" value="1"/>
</dbReference>
<protein>
    <recommendedName>
        <fullName>Transcription initiation factor IIE subunit alpha</fullName>
        <shortName>TFIIE-alpha</shortName>
    </recommendedName>
    <alternativeName>
        <fullName>Factor A 66 kDa subunit</fullName>
    </alternativeName>
    <alternativeName>
        <fullName>Transcription factor A large subunit</fullName>
    </alternativeName>
</protein>
<organism>
    <name type="scientific">Saccharomyces cerevisiae (strain ATCC 204508 / S288c)</name>
    <name type="common">Baker's yeast</name>
    <dbReference type="NCBI Taxonomy" id="559292"/>
    <lineage>
        <taxon>Eukaryota</taxon>
        <taxon>Fungi</taxon>
        <taxon>Dikarya</taxon>
        <taxon>Ascomycota</taxon>
        <taxon>Saccharomycotina</taxon>
        <taxon>Saccharomycetes</taxon>
        <taxon>Saccharomycetales</taxon>
        <taxon>Saccharomycetaceae</taxon>
        <taxon>Saccharomyces</taxon>
    </lineage>
</organism>
<feature type="chain" id="PRO_0000211225" description="Transcription initiation factor IIE subunit alpha">
    <location>
        <begin position="1"/>
        <end position="482"/>
    </location>
</feature>
<feature type="domain" description="HTH TFE/IIEalpha-type" evidence="3">
    <location>
        <begin position="9"/>
        <end position="99"/>
    </location>
</feature>
<feature type="zinc finger region" description="C4-type" evidence="2">
    <location>
        <begin position="124"/>
        <end position="152"/>
    </location>
</feature>
<feature type="region of interest" description="Disordered" evidence="4">
    <location>
        <begin position="274"/>
        <end position="295"/>
    </location>
</feature>
<feature type="region of interest" description="Disordered" evidence="4">
    <location>
        <begin position="321"/>
        <end position="482"/>
    </location>
</feature>
<feature type="compositionally biased region" description="Basic and acidic residues" evidence="4">
    <location>
        <begin position="274"/>
        <end position="286"/>
    </location>
</feature>
<feature type="compositionally biased region" description="Polar residues" evidence="4">
    <location>
        <begin position="321"/>
        <end position="345"/>
    </location>
</feature>
<feature type="compositionally biased region" description="Acidic residues" evidence="4">
    <location>
        <begin position="374"/>
        <end position="401"/>
    </location>
</feature>
<feature type="compositionally biased region" description="Polar residues" evidence="4">
    <location>
        <begin position="419"/>
        <end position="432"/>
    </location>
</feature>
<feature type="compositionally biased region" description="Basic and acidic residues" evidence="4">
    <location>
        <begin position="433"/>
        <end position="444"/>
    </location>
</feature>
<feature type="compositionally biased region" description="Acidic residues" evidence="4">
    <location>
        <begin position="464"/>
        <end position="482"/>
    </location>
</feature>
<feature type="helix" evidence="10">
    <location>
        <begin position="4"/>
        <end position="20"/>
    </location>
</feature>
<feature type="helix" evidence="10">
    <location>
        <begin position="23"/>
        <end position="34"/>
    </location>
</feature>
<feature type="strand" evidence="10">
    <location>
        <begin position="35"/>
        <end position="39"/>
    </location>
</feature>
<feature type="helix" evidence="10">
    <location>
        <begin position="40"/>
        <end position="47"/>
    </location>
</feature>
<feature type="helix" evidence="10">
    <location>
        <begin position="51"/>
        <end position="63"/>
    </location>
</feature>
<feature type="strand" evidence="10">
    <location>
        <begin position="66"/>
        <end position="74"/>
    </location>
</feature>
<feature type="strand" evidence="8">
    <location>
        <begin position="77"/>
        <end position="80"/>
    </location>
</feature>
<feature type="strand" evidence="10">
    <location>
        <begin position="82"/>
        <end position="88"/>
    </location>
</feature>
<feature type="helix" evidence="10">
    <location>
        <begin position="91"/>
        <end position="116"/>
    </location>
</feature>
<feature type="strand" evidence="7">
    <location>
        <begin position="122"/>
        <end position="124"/>
    </location>
</feature>
<feature type="turn" evidence="10">
    <location>
        <begin position="125"/>
        <end position="127"/>
    </location>
</feature>
<feature type="strand" evidence="7">
    <location>
        <begin position="129"/>
        <end position="131"/>
    </location>
</feature>
<feature type="helix" evidence="10">
    <location>
        <begin position="133"/>
        <end position="136"/>
    </location>
</feature>
<feature type="turn" evidence="9">
    <location>
        <begin position="137"/>
        <end position="139"/>
    </location>
</feature>
<feature type="strand" evidence="10">
    <location>
        <begin position="144"/>
        <end position="148"/>
    </location>
</feature>
<feature type="strand" evidence="10">
    <location>
        <begin position="150"/>
        <end position="152"/>
    </location>
</feature>
<feature type="strand" evidence="9">
    <location>
        <begin position="157"/>
        <end position="160"/>
    </location>
</feature>
<feature type="turn" evidence="11">
    <location>
        <begin position="161"/>
        <end position="163"/>
    </location>
</feature>
<feature type="helix" evidence="10">
    <location>
        <begin position="165"/>
        <end position="178"/>
    </location>
</feature>
<feature type="helix" evidence="10">
    <location>
        <begin position="180"/>
        <end position="191"/>
    </location>
</feature>
<feature type="helix" evidence="10">
    <location>
        <begin position="199"/>
        <end position="203"/>
    </location>
</feature>
<feature type="strand" evidence="10">
    <location>
        <begin position="210"/>
        <end position="212"/>
    </location>
</feature>
<feature type="strand" evidence="10">
    <location>
        <begin position="259"/>
        <end position="265"/>
    </location>
</feature>
<feature type="helix" evidence="10">
    <location>
        <begin position="267"/>
        <end position="288"/>
    </location>
</feature>
<feature type="turn" evidence="10">
    <location>
        <begin position="293"/>
        <end position="295"/>
    </location>
</feature>
<feature type="strand" evidence="10">
    <location>
        <begin position="299"/>
        <end position="301"/>
    </location>
</feature>
<feature type="helix" evidence="10">
    <location>
        <begin position="350"/>
        <end position="368"/>
    </location>
</feature>
<feature type="strand" evidence="10">
    <location>
        <begin position="414"/>
        <end position="416"/>
    </location>
</feature>
<gene>
    <name type="primary">TFA1</name>
    <name type="ordered locus">YKL028W</name>
</gene>
<proteinExistence type="evidence at protein level"/>
<evidence type="ECO:0000250" key="1"/>
<evidence type="ECO:0000255" key="2"/>
<evidence type="ECO:0000255" key="3">
    <source>
        <dbReference type="PROSITE-ProRule" id="PRU00676"/>
    </source>
</evidence>
<evidence type="ECO:0000256" key="4">
    <source>
        <dbReference type="SAM" id="MobiDB-lite"/>
    </source>
</evidence>
<evidence type="ECO:0000269" key="5">
    <source>
    </source>
</evidence>
<evidence type="ECO:0000305" key="6"/>
<evidence type="ECO:0007829" key="7">
    <source>
        <dbReference type="PDB" id="7ML0"/>
    </source>
</evidence>
<evidence type="ECO:0007829" key="8">
    <source>
        <dbReference type="PDB" id="7ML2"/>
    </source>
</evidence>
<evidence type="ECO:0007829" key="9">
    <source>
        <dbReference type="PDB" id="7ML4"/>
    </source>
</evidence>
<evidence type="ECO:0007829" key="10">
    <source>
        <dbReference type="PDB" id="7O4J"/>
    </source>
</evidence>
<evidence type="ECO:0007829" key="11">
    <source>
        <dbReference type="PDB" id="7ZS9"/>
    </source>
</evidence>